<reference key="1">
    <citation type="journal article" date="2009" name="Appl. Environ. Microbiol.">
        <title>Complete genome sequence of the chemolithoautotrophic marine magnetotactic coccus strain MC-1.</title>
        <authorList>
            <person name="Schubbe S."/>
            <person name="Williams T.J."/>
            <person name="Xie G."/>
            <person name="Kiss H.E."/>
            <person name="Brettin T.S."/>
            <person name="Martinez D."/>
            <person name="Ross C.A."/>
            <person name="Schuler D."/>
            <person name="Cox B.L."/>
            <person name="Nealson K.H."/>
            <person name="Bazylinski D.A."/>
        </authorList>
    </citation>
    <scope>NUCLEOTIDE SEQUENCE [LARGE SCALE GENOMIC DNA]</scope>
    <source>
        <strain>ATCC BAA-1437 / JCM 17883 / MC-1</strain>
    </source>
</reference>
<comment type="function">
    <text evidence="1">Binds as a heterodimer with protein bS6 to the central domain of the 16S rRNA, where it helps stabilize the platform of the 30S subunit.</text>
</comment>
<comment type="subunit">
    <text evidence="1">Part of the 30S ribosomal subunit. Forms a tight heterodimer with protein bS6.</text>
</comment>
<comment type="similarity">
    <text evidence="1">Belongs to the bacterial ribosomal protein bS18 family.</text>
</comment>
<feature type="chain" id="PRO_0000345491" description="Small ribosomal subunit protein bS18">
    <location>
        <begin position="1"/>
        <end position="106"/>
    </location>
</feature>
<feature type="region of interest" description="Disordered" evidence="2">
    <location>
        <begin position="1"/>
        <end position="32"/>
    </location>
</feature>
<feature type="compositionally biased region" description="Basic and acidic residues" evidence="2">
    <location>
        <begin position="7"/>
        <end position="21"/>
    </location>
</feature>
<gene>
    <name evidence="1" type="primary">rpsR</name>
    <name type="ordered locus">Mmc1_2460</name>
</gene>
<protein>
    <recommendedName>
        <fullName evidence="1">Small ribosomal subunit protein bS18</fullName>
    </recommendedName>
    <alternativeName>
        <fullName evidence="3">30S ribosomal protein S18</fullName>
    </alternativeName>
</protein>
<name>RS18_MAGMM</name>
<proteinExistence type="inferred from homology"/>
<sequence>MRWMKIMSEDMKQEQSGEGRGGRGGPARPLASARRPFFRRRKVCPFCADKGLKIDYKDPKMLSRYITERGKMVPSRITGVCAPHQRKLSVAIKRARNIALLPFIVK</sequence>
<dbReference type="EMBL" id="CP000471">
    <property type="protein sequence ID" value="ABK44960.1"/>
    <property type="molecule type" value="Genomic_DNA"/>
</dbReference>
<dbReference type="SMR" id="A0LAG7"/>
<dbReference type="STRING" id="156889.Mmc1_2460"/>
<dbReference type="KEGG" id="mgm:Mmc1_2460"/>
<dbReference type="eggNOG" id="COG0238">
    <property type="taxonomic scope" value="Bacteria"/>
</dbReference>
<dbReference type="HOGENOM" id="CLU_148710_2_1_5"/>
<dbReference type="Proteomes" id="UP000002586">
    <property type="component" value="Chromosome"/>
</dbReference>
<dbReference type="GO" id="GO:0022627">
    <property type="term" value="C:cytosolic small ribosomal subunit"/>
    <property type="evidence" value="ECO:0007669"/>
    <property type="project" value="TreeGrafter"/>
</dbReference>
<dbReference type="GO" id="GO:0070181">
    <property type="term" value="F:small ribosomal subunit rRNA binding"/>
    <property type="evidence" value="ECO:0007669"/>
    <property type="project" value="TreeGrafter"/>
</dbReference>
<dbReference type="GO" id="GO:0003735">
    <property type="term" value="F:structural constituent of ribosome"/>
    <property type="evidence" value="ECO:0007669"/>
    <property type="project" value="InterPro"/>
</dbReference>
<dbReference type="GO" id="GO:0006412">
    <property type="term" value="P:translation"/>
    <property type="evidence" value="ECO:0007669"/>
    <property type="project" value="UniProtKB-UniRule"/>
</dbReference>
<dbReference type="Gene3D" id="4.10.640.10">
    <property type="entry name" value="Ribosomal protein S18"/>
    <property type="match status" value="1"/>
</dbReference>
<dbReference type="HAMAP" id="MF_00270">
    <property type="entry name" value="Ribosomal_bS18"/>
    <property type="match status" value="1"/>
</dbReference>
<dbReference type="InterPro" id="IPR001648">
    <property type="entry name" value="Ribosomal_bS18"/>
</dbReference>
<dbReference type="InterPro" id="IPR018275">
    <property type="entry name" value="Ribosomal_bS18_CS"/>
</dbReference>
<dbReference type="InterPro" id="IPR036870">
    <property type="entry name" value="Ribosomal_bS18_sf"/>
</dbReference>
<dbReference type="NCBIfam" id="TIGR00165">
    <property type="entry name" value="S18"/>
    <property type="match status" value="1"/>
</dbReference>
<dbReference type="PANTHER" id="PTHR13479">
    <property type="entry name" value="30S RIBOSOMAL PROTEIN S18"/>
    <property type="match status" value="1"/>
</dbReference>
<dbReference type="PANTHER" id="PTHR13479:SF40">
    <property type="entry name" value="SMALL RIBOSOMAL SUBUNIT PROTEIN BS18M"/>
    <property type="match status" value="1"/>
</dbReference>
<dbReference type="Pfam" id="PF01084">
    <property type="entry name" value="Ribosomal_S18"/>
    <property type="match status" value="1"/>
</dbReference>
<dbReference type="PRINTS" id="PR00974">
    <property type="entry name" value="RIBOSOMALS18"/>
</dbReference>
<dbReference type="SUPFAM" id="SSF46911">
    <property type="entry name" value="Ribosomal protein S18"/>
    <property type="match status" value="1"/>
</dbReference>
<dbReference type="PROSITE" id="PS00057">
    <property type="entry name" value="RIBOSOMAL_S18"/>
    <property type="match status" value="1"/>
</dbReference>
<keyword id="KW-1185">Reference proteome</keyword>
<keyword id="KW-0687">Ribonucleoprotein</keyword>
<keyword id="KW-0689">Ribosomal protein</keyword>
<keyword id="KW-0694">RNA-binding</keyword>
<keyword id="KW-0699">rRNA-binding</keyword>
<evidence type="ECO:0000255" key="1">
    <source>
        <dbReference type="HAMAP-Rule" id="MF_00270"/>
    </source>
</evidence>
<evidence type="ECO:0000256" key="2">
    <source>
        <dbReference type="SAM" id="MobiDB-lite"/>
    </source>
</evidence>
<evidence type="ECO:0000305" key="3"/>
<accession>A0LAG7</accession>
<organism>
    <name type="scientific">Magnetococcus marinus (strain ATCC BAA-1437 / JCM 17883 / MC-1)</name>
    <dbReference type="NCBI Taxonomy" id="156889"/>
    <lineage>
        <taxon>Bacteria</taxon>
        <taxon>Pseudomonadati</taxon>
        <taxon>Pseudomonadota</taxon>
        <taxon>Alphaproteobacteria</taxon>
        <taxon>Magnetococcales</taxon>
        <taxon>Magnetococcaceae</taxon>
        <taxon>Magnetococcus</taxon>
    </lineage>
</organism>